<organism>
    <name type="scientific">Methanocorpusculum labreanum (strain ATCC 43576 / DSM 4855 / Z)</name>
    <dbReference type="NCBI Taxonomy" id="410358"/>
    <lineage>
        <taxon>Archaea</taxon>
        <taxon>Methanobacteriati</taxon>
        <taxon>Methanobacteriota</taxon>
        <taxon>Stenosarchaea group</taxon>
        <taxon>Methanomicrobia</taxon>
        <taxon>Methanomicrobiales</taxon>
        <taxon>Methanocorpusculaceae</taxon>
        <taxon>Methanocorpusculum</taxon>
    </lineage>
</organism>
<evidence type="ECO:0000255" key="1">
    <source>
        <dbReference type="HAMAP-Rule" id="MF_00211"/>
    </source>
</evidence>
<name>TRPD_METLZ</name>
<accession>A2STA7</accession>
<protein>
    <recommendedName>
        <fullName evidence="1">Anthranilate phosphoribosyltransferase</fullName>
        <ecNumber evidence="1">2.4.2.18</ecNumber>
    </recommendedName>
</protein>
<comment type="function">
    <text evidence="1">Catalyzes the transfer of the phosphoribosyl group of 5-phosphorylribose-1-pyrophosphate (PRPP) to anthranilate to yield N-(5'-phosphoribosyl)-anthranilate (PRA).</text>
</comment>
<comment type="catalytic activity">
    <reaction evidence="1">
        <text>N-(5-phospho-beta-D-ribosyl)anthranilate + diphosphate = 5-phospho-alpha-D-ribose 1-diphosphate + anthranilate</text>
        <dbReference type="Rhea" id="RHEA:11768"/>
        <dbReference type="ChEBI" id="CHEBI:16567"/>
        <dbReference type="ChEBI" id="CHEBI:18277"/>
        <dbReference type="ChEBI" id="CHEBI:33019"/>
        <dbReference type="ChEBI" id="CHEBI:58017"/>
        <dbReference type="EC" id="2.4.2.18"/>
    </reaction>
</comment>
<comment type="cofactor">
    <cofactor evidence="1">
        <name>Mg(2+)</name>
        <dbReference type="ChEBI" id="CHEBI:18420"/>
    </cofactor>
    <text evidence="1">Binds 2 magnesium ions per monomer.</text>
</comment>
<comment type="pathway">
    <text evidence="1">Amino-acid biosynthesis; L-tryptophan biosynthesis; L-tryptophan from chorismate: step 2/5.</text>
</comment>
<comment type="subunit">
    <text evidence="1">Homodimer.</text>
</comment>
<comment type="similarity">
    <text evidence="1">Belongs to the anthranilate phosphoribosyltransferase family.</text>
</comment>
<feature type="chain" id="PRO_1000043031" description="Anthranilate phosphoribosyltransferase">
    <location>
        <begin position="1"/>
        <end position="340"/>
    </location>
</feature>
<feature type="binding site" evidence="1">
    <location>
        <position position="81"/>
    </location>
    <ligand>
        <name>5-phospho-alpha-D-ribose 1-diphosphate</name>
        <dbReference type="ChEBI" id="CHEBI:58017"/>
    </ligand>
</feature>
<feature type="binding site" evidence="1">
    <location>
        <position position="81"/>
    </location>
    <ligand>
        <name>anthranilate</name>
        <dbReference type="ChEBI" id="CHEBI:16567"/>
        <label>1</label>
    </ligand>
</feature>
<feature type="binding site" evidence="1">
    <location>
        <begin position="84"/>
        <end position="85"/>
    </location>
    <ligand>
        <name>5-phospho-alpha-D-ribose 1-diphosphate</name>
        <dbReference type="ChEBI" id="CHEBI:58017"/>
    </ligand>
</feature>
<feature type="binding site" evidence="1">
    <location>
        <position position="89"/>
    </location>
    <ligand>
        <name>5-phospho-alpha-D-ribose 1-diphosphate</name>
        <dbReference type="ChEBI" id="CHEBI:58017"/>
    </ligand>
</feature>
<feature type="binding site" evidence="1">
    <location>
        <begin position="91"/>
        <end position="94"/>
    </location>
    <ligand>
        <name>5-phospho-alpha-D-ribose 1-diphosphate</name>
        <dbReference type="ChEBI" id="CHEBI:58017"/>
    </ligand>
</feature>
<feature type="binding site" evidence="1">
    <location>
        <position position="93"/>
    </location>
    <ligand>
        <name>Mg(2+)</name>
        <dbReference type="ChEBI" id="CHEBI:18420"/>
        <label>1</label>
    </ligand>
</feature>
<feature type="binding site" evidence="1">
    <location>
        <begin position="109"/>
        <end position="117"/>
    </location>
    <ligand>
        <name>5-phospho-alpha-D-ribose 1-diphosphate</name>
        <dbReference type="ChEBI" id="CHEBI:58017"/>
    </ligand>
</feature>
<feature type="binding site" evidence="1">
    <location>
        <position position="112"/>
    </location>
    <ligand>
        <name>anthranilate</name>
        <dbReference type="ChEBI" id="CHEBI:16567"/>
        <label>1</label>
    </ligand>
</feature>
<feature type="binding site" evidence="1">
    <location>
        <position position="121"/>
    </location>
    <ligand>
        <name>5-phospho-alpha-D-ribose 1-diphosphate</name>
        <dbReference type="ChEBI" id="CHEBI:58017"/>
    </ligand>
</feature>
<feature type="binding site" evidence="1">
    <location>
        <position position="167"/>
    </location>
    <ligand>
        <name>anthranilate</name>
        <dbReference type="ChEBI" id="CHEBI:16567"/>
        <label>2</label>
    </ligand>
</feature>
<feature type="binding site" evidence="1">
    <location>
        <position position="225"/>
    </location>
    <ligand>
        <name>Mg(2+)</name>
        <dbReference type="ChEBI" id="CHEBI:18420"/>
        <label>2</label>
    </ligand>
</feature>
<feature type="binding site" evidence="1">
    <location>
        <position position="226"/>
    </location>
    <ligand>
        <name>Mg(2+)</name>
        <dbReference type="ChEBI" id="CHEBI:18420"/>
        <label>1</label>
    </ligand>
</feature>
<feature type="binding site" evidence="1">
    <location>
        <position position="226"/>
    </location>
    <ligand>
        <name>Mg(2+)</name>
        <dbReference type="ChEBI" id="CHEBI:18420"/>
        <label>2</label>
    </ligand>
</feature>
<reference key="1">
    <citation type="journal article" date="2009" name="Stand. Genomic Sci.">
        <title>Complete genome sequence of Methanocorpusculum labreanum type strain Z.</title>
        <authorList>
            <person name="Anderson I.J."/>
            <person name="Sieprawska-Lupa M."/>
            <person name="Goltsman E."/>
            <person name="Lapidus A."/>
            <person name="Copeland A."/>
            <person name="Glavina Del Rio T."/>
            <person name="Tice H."/>
            <person name="Dalin E."/>
            <person name="Barry K."/>
            <person name="Pitluck S."/>
            <person name="Hauser L."/>
            <person name="Land M."/>
            <person name="Lucas S."/>
            <person name="Richardson P."/>
            <person name="Whitman W.B."/>
            <person name="Kyrpides N.C."/>
        </authorList>
    </citation>
    <scope>NUCLEOTIDE SEQUENCE [LARGE SCALE GENOMIC DNA]</scope>
    <source>
        <strain>ATCC 43576 / DSM 4855 / Z</strain>
    </source>
</reference>
<gene>
    <name evidence="1" type="primary">trpD</name>
    <name type="ordered locus">Mlab_1397</name>
</gene>
<keyword id="KW-0028">Amino-acid biosynthesis</keyword>
<keyword id="KW-0057">Aromatic amino acid biosynthesis</keyword>
<keyword id="KW-0328">Glycosyltransferase</keyword>
<keyword id="KW-0460">Magnesium</keyword>
<keyword id="KW-0479">Metal-binding</keyword>
<keyword id="KW-1185">Reference proteome</keyword>
<keyword id="KW-0808">Transferase</keyword>
<keyword id="KW-0822">Tryptophan biosynthesis</keyword>
<dbReference type="EC" id="2.4.2.18" evidence="1"/>
<dbReference type="EMBL" id="CP000559">
    <property type="protein sequence ID" value="ABN07563.1"/>
    <property type="molecule type" value="Genomic_DNA"/>
</dbReference>
<dbReference type="RefSeq" id="WP_011833766.1">
    <property type="nucleotide sequence ID" value="NC_008942.1"/>
</dbReference>
<dbReference type="SMR" id="A2STA7"/>
<dbReference type="STRING" id="410358.Mlab_1397"/>
<dbReference type="GeneID" id="4796162"/>
<dbReference type="KEGG" id="mla:Mlab_1397"/>
<dbReference type="eggNOG" id="arCOG02012">
    <property type="taxonomic scope" value="Archaea"/>
</dbReference>
<dbReference type="HOGENOM" id="CLU_034315_2_1_2"/>
<dbReference type="OrthoDB" id="8214at2157"/>
<dbReference type="UniPathway" id="UPA00035">
    <property type="reaction ID" value="UER00041"/>
</dbReference>
<dbReference type="Proteomes" id="UP000000365">
    <property type="component" value="Chromosome"/>
</dbReference>
<dbReference type="GO" id="GO:0005829">
    <property type="term" value="C:cytosol"/>
    <property type="evidence" value="ECO:0007669"/>
    <property type="project" value="TreeGrafter"/>
</dbReference>
<dbReference type="GO" id="GO:0004048">
    <property type="term" value="F:anthranilate phosphoribosyltransferase activity"/>
    <property type="evidence" value="ECO:0007669"/>
    <property type="project" value="UniProtKB-UniRule"/>
</dbReference>
<dbReference type="GO" id="GO:0000287">
    <property type="term" value="F:magnesium ion binding"/>
    <property type="evidence" value="ECO:0007669"/>
    <property type="project" value="UniProtKB-UniRule"/>
</dbReference>
<dbReference type="GO" id="GO:0000162">
    <property type="term" value="P:L-tryptophan biosynthetic process"/>
    <property type="evidence" value="ECO:0007669"/>
    <property type="project" value="UniProtKB-UniRule"/>
</dbReference>
<dbReference type="FunFam" id="3.40.1030.10:FF:000002">
    <property type="entry name" value="Anthranilate phosphoribosyltransferase"/>
    <property type="match status" value="1"/>
</dbReference>
<dbReference type="Gene3D" id="3.40.1030.10">
    <property type="entry name" value="Nucleoside phosphorylase/phosphoribosyltransferase catalytic domain"/>
    <property type="match status" value="1"/>
</dbReference>
<dbReference type="Gene3D" id="1.20.970.10">
    <property type="entry name" value="Transferase, Pyrimidine Nucleoside Phosphorylase, Chain C"/>
    <property type="match status" value="1"/>
</dbReference>
<dbReference type="HAMAP" id="MF_00211">
    <property type="entry name" value="TrpD"/>
    <property type="match status" value="1"/>
</dbReference>
<dbReference type="InterPro" id="IPR005940">
    <property type="entry name" value="Anthranilate_Pribosyl_Tfrase"/>
</dbReference>
<dbReference type="InterPro" id="IPR000312">
    <property type="entry name" value="Glycosyl_Trfase_fam3"/>
</dbReference>
<dbReference type="InterPro" id="IPR017459">
    <property type="entry name" value="Glycosyl_Trfase_fam3_N_dom"/>
</dbReference>
<dbReference type="InterPro" id="IPR036320">
    <property type="entry name" value="Glycosyl_Trfase_fam3_N_dom_sf"/>
</dbReference>
<dbReference type="InterPro" id="IPR035902">
    <property type="entry name" value="Nuc_phospho_transferase"/>
</dbReference>
<dbReference type="NCBIfam" id="TIGR01245">
    <property type="entry name" value="trpD"/>
    <property type="match status" value="1"/>
</dbReference>
<dbReference type="PANTHER" id="PTHR43285">
    <property type="entry name" value="ANTHRANILATE PHOSPHORIBOSYLTRANSFERASE"/>
    <property type="match status" value="1"/>
</dbReference>
<dbReference type="PANTHER" id="PTHR43285:SF2">
    <property type="entry name" value="ANTHRANILATE PHOSPHORIBOSYLTRANSFERASE"/>
    <property type="match status" value="1"/>
</dbReference>
<dbReference type="Pfam" id="PF02885">
    <property type="entry name" value="Glycos_trans_3N"/>
    <property type="match status" value="1"/>
</dbReference>
<dbReference type="Pfam" id="PF00591">
    <property type="entry name" value="Glycos_transf_3"/>
    <property type="match status" value="1"/>
</dbReference>
<dbReference type="SUPFAM" id="SSF52418">
    <property type="entry name" value="Nucleoside phosphorylase/phosphoribosyltransferase catalytic domain"/>
    <property type="match status" value="1"/>
</dbReference>
<dbReference type="SUPFAM" id="SSF47648">
    <property type="entry name" value="Nucleoside phosphorylase/phosphoribosyltransferase N-terminal domain"/>
    <property type="match status" value="1"/>
</dbReference>
<proteinExistence type="inferred from homology"/>
<sequence length="340" mass="35571">MIAECIKKVASHSDLSVYEAKGAMQDIMSGNATDGQIGAFLTALVMKGETSSEIAAFASVMRENAVQITPKRNGMLVDTCGTGGDGKNTFNISTAAAFTAAGAGVTVVKHGNRGATSKCGSADVLEALGIKIDISPERVCEIIDENGIGFMFAQSHHPAMKYAGKVRKEIGIRSFFNLIGPLSNPAGADAQLLGVYDSPLTEKIAEVLNILGTKRAMVVHGDGYDEITTTGITQVSEVNDGQVRSYSLDPSSFGFQKADAASLFGGDSQYNAHIIRSVLSGDEGPRRDIVILNAAAAIYLGERAGSIADGIKYAEKSIDSGLALEKLENLILLSGGKNDS</sequence>